<name>YN097_YEAST</name>
<accession>Q8TGL8</accession>
<evidence type="ECO:0000305" key="1"/>
<evidence type="ECO:0000305" key="2">
    <source>
    </source>
</evidence>
<organism>
    <name type="scientific">Saccharomyces cerevisiae (strain ATCC 204508 / S288c)</name>
    <name type="common">Baker's yeast</name>
    <dbReference type="NCBI Taxonomy" id="559292"/>
    <lineage>
        <taxon>Eukaryota</taxon>
        <taxon>Fungi</taxon>
        <taxon>Dikarya</taxon>
        <taxon>Ascomycota</taxon>
        <taxon>Saccharomycotina</taxon>
        <taxon>Saccharomycetes</taxon>
        <taxon>Saccharomycetales</taxon>
        <taxon>Saccharomycetaceae</taxon>
        <taxon>Saccharomyces</taxon>
    </lineage>
</organism>
<gene>
    <name type="ordered locus">YNL097W-A</name>
</gene>
<proteinExistence type="uncertain"/>
<feature type="chain" id="PRO_0000299676" description="Putative uncharacterized protein YNL097W-A">
    <location>
        <begin position="1"/>
        <end position="51"/>
    </location>
</feature>
<sequence length="51" mass="5896">MANGTILAHSLRHHTPPFPRMPLGYSSSRAVRRSRWFLVLISCCCCCFRRC</sequence>
<comment type="miscellaneous">
    <text evidence="1">Completely overlaps PHO23.</text>
</comment>
<comment type="caution">
    <text evidence="2">Product of a dubious gene prediction unlikely to encode a functional protein. Because of that it is not part of the S.cerevisiae S288c complete/reference proteome set.</text>
</comment>
<dbReference type="EMBL" id="Z50161">
    <property type="status" value="NOT_ANNOTATED_CDS"/>
    <property type="molecule type" value="Genomic_DNA"/>
</dbReference>
<dbReference type="EMBL" id="Z71373">
    <property type="status" value="NOT_ANNOTATED_CDS"/>
    <property type="molecule type" value="Genomic_DNA"/>
</dbReference>
<dbReference type="EMBL" id="AF479974">
    <property type="protein sequence ID" value="AAL79287.1"/>
    <property type="molecule type" value="Genomic_DNA"/>
</dbReference>
<dbReference type="STRING" id="4932.YNL097W-A"/>
<dbReference type="PaxDb" id="4932-YNL097W-A"/>
<dbReference type="EnsemblFungi" id="YNL097W-A_mRNA">
    <property type="protein sequence ID" value="YNL097W-A"/>
    <property type="gene ID" value="YNL097W-A"/>
</dbReference>
<dbReference type="AGR" id="SGD:S000028700"/>
<dbReference type="SGD" id="S000028700">
    <property type="gene designation" value="YNL097W-A"/>
</dbReference>
<dbReference type="HOGENOM" id="CLU_3108207_0_0_1"/>
<reference key="1">
    <citation type="journal article" date="1996" name="Yeast">
        <title>The sequence of a 21.3 kb DNA fragment from the left arm of yeast chromosome XIV reveals LEU4, MET4, POL1, RAS2, and six new open reading frames.</title>
        <authorList>
            <person name="Saiz J.E."/>
            <person name="Buitrago M.J."/>
            <person name="Soler A."/>
            <person name="del Rey F."/>
            <person name="Revuelta J.L."/>
        </authorList>
    </citation>
    <scope>NUCLEOTIDE SEQUENCE [GENOMIC DNA]</scope>
    <source>
        <strain>ATCC 96604 / S288c / FY1679</strain>
    </source>
</reference>
<reference key="2">
    <citation type="journal article" date="1997" name="Nature">
        <title>The nucleotide sequence of Saccharomyces cerevisiae chromosome XIV and its evolutionary implications.</title>
        <authorList>
            <person name="Philippsen P."/>
            <person name="Kleine K."/>
            <person name="Poehlmann R."/>
            <person name="Duesterhoeft A."/>
            <person name="Hamberg K."/>
            <person name="Hegemann J.H."/>
            <person name="Obermaier B."/>
            <person name="Urrestarazu L.A."/>
            <person name="Aert R."/>
            <person name="Albermann K."/>
            <person name="Altmann R."/>
            <person name="Andre B."/>
            <person name="Baladron V."/>
            <person name="Ballesta J.P.G."/>
            <person name="Becam A.-M."/>
            <person name="Beinhauer J.D."/>
            <person name="Boskovic J."/>
            <person name="Buitrago M.J."/>
            <person name="Bussereau F."/>
            <person name="Coster F."/>
            <person name="Crouzet M."/>
            <person name="D'Angelo M."/>
            <person name="Dal Pero F."/>
            <person name="De Antoni A."/>
            <person name="del Rey F."/>
            <person name="Doignon F."/>
            <person name="Domdey H."/>
            <person name="Dubois E."/>
            <person name="Fiedler T.A."/>
            <person name="Fleig U."/>
            <person name="Floeth M."/>
            <person name="Fritz C."/>
            <person name="Gaillardin C."/>
            <person name="Garcia-Cantalejo J.M."/>
            <person name="Glansdorff N."/>
            <person name="Goffeau A."/>
            <person name="Gueldener U."/>
            <person name="Herbert C.J."/>
            <person name="Heumann K."/>
            <person name="Heuss-Neitzel D."/>
            <person name="Hilbert H."/>
            <person name="Hinni K."/>
            <person name="Iraqui Houssaini I."/>
            <person name="Jacquet M."/>
            <person name="Jimenez A."/>
            <person name="Jonniaux J.-L."/>
            <person name="Karpfinger-Hartl L."/>
            <person name="Lanfranchi G."/>
            <person name="Lepingle A."/>
            <person name="Levesque H."/>
            <person name="Lyck R."/>
            <person name="Maftahi M."/>
            <person name="Mallet L."/>
            <person name="Maurer C.T.C."/>
            <person name="Messenguy F."/>
            <person name="Mewes H.-W."/>
            <person name="Moestl D."/>
            <person name="Nasr F."/>
            <person name="Nicaud J.-M."/>
            <person name="Niedenthal R.K."/>
            <person name="Pandolfo D."/>
            <person name="Pierard A."/>
            <person name="Piravandi E."/>
            <person name="Planta R.J."/>
            <person name="Pohl T.M."/>
            <person name="Purnelle B."/>
            <person name="Rebischung C."/>
            <person name="Remacha M.A."/>
            <person name="Revuelta J.L."/>
            <person name="Rinke M."/>
            <person name="Saiz J.E."/>
            <person name="Sartorello F."/>
            <person name="Scherens B."/>
            <person name="Sen-Gupta M."/>
            <person name="Soler-Mira A."/>
            <person name="Urbanus J.H.M."/>
            <person name="Valle G."/>
            <person name="Van Dyck L."/>
            <person name="Verhasselt P."/>
            <person name="Vierendeels F."/>
            <person name="Vissers S."/>
            <person name="Voet M."/>
            <person name="Volckaert G."/>
            <person name="Wach A."/>
            <person name="Wambutt R."/>
            <person name="Wedler H."/>
            <person name="Zollner A."/>
            <person name="Hani J."/>
        </authorList>
    </citation>
    <scope>NUCLEOTIDE SEQUENCE [LARGE SCALE GENOMIC DNA]</scope>
    <source>
        <strain>ATCC 204508 / S288c</strain>
    </source>
</reference>
<reference key="3">
    <citation type="journal article" date="2014" name="G3 (Bethesda)">
        <title>The reference genome sequence of Saccharomyces cerevisiae: Then and now.</title>
        <authorList>
            <person name="Engel S.R."/>
            <person name="Dietrich F.S."/>
            <person name="Fisk D.G."/>
            <person name="Binkley G."/>
            <person name="Balakrishnan R."/>
            <person name="Costanzo M.C."/>
            <person name="Dwight S.S."/>
            <person name="Hitz B.C."/>
            <person name="Karra K."/>
            <person name="Nash R.S."/>
            <person name="Weng S."/>
            <person name="Wong E.D."/>
            <person name="Lloyd P."/>
            <person name="Skrzypek M.S."/>
            <person name="Miyasato S.R."/>
            <person name="Simison M."/>
            <person name="Cherry J.M."/>
        </authorList>
    </citation>
    <scope>GENOME REANNOTATION</scope>
    <source>
        <strain>ATCC 204508 / S288c</strain>
    </source>
</reference>
<reference key="4">
    <citation type="journal article" date="2002" name="Nat. Biotechnol.">
        <title>An integrated approach for finding overlooked genes in yeast.</title>
        <authorList>
            <person name="Kumar A."/>
            <person name="Harrison P.M."/>
            <person name="Cheung K.-H."/>
            <person name="Lan N."/>
            <person name="Echols N."/>
            <person name="Bertone P."/>
            <person name="Miller P."/>
            <person name="Gerstein M.B."/>
            <person name="Snyder M."/>
        </authorList>
    </citation>
    <scope>NUCLEOTIDE SEQUENCE [GENOMIC DNA]</scope>
</reference>
<protein>
    <recommendedName>
        <fullName>Putative uncharacterized protein YNL097W-A</fullName>
    </recommendedName>
</protein>